<sequence length="338" mass="35911">MKRMIALDGAQGEGGGQILRSALSLSMITGQPFTITGIRAGRAKPGLLRQHLTAVKAAAEICRATVEGAELGSQRLVFRPGTVRGGDYRFAIGSAGSCTLVLQTVLPALWFADGPSRVEVSGGTDNPSAPPADFIRRVLEPLLAKIGVHQQTTLLRHGFYPAGGGVVATEVSPVASFNSLQLGERGNIVQMRGEVLLAGVPRHVAEREIATLAGSFSLHEQNIHNLPRDQGPGNTVSLEVESENITERFFVVGEKRVSAEVVAAQLVKEVKRYLASPAAVGEYLADQLVLPMALAGAGEFTVAHPSCHLQTNIAVVERFLPVRFSLIETDGVTRVSIE</sequence>
<gene>
    <name evidence="1" type="primary">rtcA</name>
    <name type="ordered locus">ECED1_4080</name>
</gene>
<feature type="chain" id="PRO_1000195102" description="RNA 3'-terminal phosphate cyclase">
    <location>
        <begin position="1"/>
        <end position="338"/>
    </location>
</feature>
<feature type="active site" description="Tele-AMP-histidine intermediate" evidence="1">
    <location>
        <position position="308"/>
    </location>
</feature>
<feature type="binding site" evidence="1">
    <location>
        <position position="103"/>
    </location>
    <ligand>
        <name>ATP</name>
        <dbReference type="ChEBI" id="CHEBI:30616"/>
    </ligand>
</feature>
<feature type="binding site" evidence="1">
    <location>
        <begin position="283"/>
        <end position="287"/>
    </location>
    <ligand>
        <name>ATP</name>
        <dbReference type="ChEBI" id="CHEBI:30616"/>
    </ligand>
</feature>
<organism>
    <name type="scientific">Escherichia coli O81 (strain ED1a)</name>
    <dbReference type="NCBI Taxonomy" id="585397"/>
    <lineage>
        <taxon>Bacteria</taxon>
        <taxon>Pseudomonadati</taxon>
        <taxon>Pseudomonadota</taxon>
        <taxon>Gammaproteobacteria</taxon>
        <taxon>Enterobacterales</taxon>
        <taxon>Enterobacteriaceae</taxon>
        <taxon>Escherichia</taxon>
    </lineage>
</organism>
<keyword id="KW-0067">ATP-binding</keyword>
<keyword id="KW-0963">Cytoplasm</keyword>
<keyword id="KW-0436">Ligase</keyword>
<keyword id="KW-0547">Nucleotide-binding</keyword>
<name>RTCA_ECO81</name>
<accession>B7N1J7</accession>
<dbReference type="EC" id="6.5.1.4" evidence="1"/>
<dbReference type="EMBL" id="CU928162">
    <property type="protein sequence ID" value="CAR10217.2"/>
    <property type="molecule type" value="Genomic_DNA"/>
</dbReference>
<dbReference type="RefSeq" id="WP_001683364.1">
    <property type="nucleotide sequence ID" value="NC_011745.1"/>
</dbReference>
<dbReference type="SMR" id="B7N1J7"/>
<dbReference type="KEGG" id="ecq:ECED1_4080"/>
<dbReference type="HOGENOM" id="CLU_027882_0_0_6"/>
<dbReference type="Proteomes" id="UP000000748">
    <property type="component" value="Chromosome"/>
</dbReference>
<dbReference type="GO" id="GO:0005737">
    <property type="term" value="C:cytoplasm"/>
    <property type="evidence" value="ECO:0007669"/>
    <property type="project" value="UniProtKB-SubCell"/>
</dbReference>
<dbReference type="GO" id="GO:0005524">
    <property type="term" value="F:ATP binding"/>
    <property type="evidence" value="ECO:0007669"/>
    <property type="project" value="UniProtKB-KW"/>
</dbReference>
<dbReference type="GO" id="GO:0003963">
    <property type="term" value="F:RNA-3'-phosphate cyclase activity"/>
    <property type="evidence" value="ECO:0007669"/>
    <property type="project" value="UniProtKB-UniRule"/>
</dbReference>
<dbReference type="GO" id="GO:0006396">
    <property type="term" value="P:RNA processing"/>
    <property type="evidence" value="ECO:0007669"/>
    <property type="project" value="InterPro"/>
</dbReference>
<dbReference type="FunFam" id="3.65.10.20:FF:000002">
    <property type="entry name" value="GM19193"/>
    <property type="match status" value="1"/>
</dbReference>
<dbReference type="FunFam" id="3.30.360.20:FF:000003">
    <property type="entry name" value="RNA 3'-terminal phosphate cyclase"/>
    <property type="match status" value="1"/>
</dbReference>
<dbReference type="Gene3D" id="3.65.10.20">
    <property type="entry name" value="RNA 3'-terminal phosphate cyclase domain"/>
    <property type="match status" value="1"/>
</dbReference>
<dbReference type="Gene3D" id="3.30.360.20">
    <property type="entry name" value="RNA 3'-terminal phosphate cyclase, insert domain"/>
    <property type="match status" value="1"/>
</dbReference>
<dbReference type="HAMAP" id="MF_00200">
    <property type="entry name" value="RTC"/>
    <property type="match status" value="1"/>
</dbReference>
<dbReference type="InterPro" id="IPR013791">
    <property type="entry name" value="RNA3'-term_phos_cycl_insert"/>
</dbReference>
<dbReference type="InterPro" id="IPR023797">
    <property type="entry name" value="RNA3'_phos_cyclase_dom"/>
</dbReference>
<dbReference type="InterPro" id="IPR037136">
    <property type="entry name" value="RNA3'_phos_cyclase_dom_sf"/>
</dbReference>
<dbReference type="InterPro" id="IPR000228">
    <property type="entry name" value="RNA3'_term_phos_cyc"/>
</dbReference>
<dbReference type="InterPro" id="IPR017770">
    <property type="entry name" value="RNA3'_term_phos_cyc_type_1"/>
</dbReference>
<dbReference type="InterPro" id="IPR020719">
    <property type="entry name" value="RNA3'_term_phos_cycl-like_CS"/>
</dbReference>
<dbReference type="InterPro" id="IPR013792">
    <property type="entry name" value="RNA3'P_cycl/enolpyr_Trfase_a/b"/>
</dbReference>
<dbReference type="InterPro" id="IPR036553">
    <property type="entry name" value="RPTC_insert"/>
</dbReference>
<dbReference type="NCBIfam" id="NF003246">
    <property type="entry name" value="PRK04204.1-2"/>
    <property type="match status" value="1"/>
</dbReference>
<dbReference type="NCBIfam" id="NF003247">
    <property type="entry name" value="PRK04204.1-3"/>
    <property type="match status" value="1"/>
</dbReference>
<dbReference type="NCBIfam" id="TIGR03399">
    <property type="entry name" value="RNA_3prim_cycl"/>
    <property type="match status" value="1"/>
</dbReference>
<dbReference type="PANTHER" id="PTHR11096">
    <property type="entry name" value="RNA 3' TERMINAL PHOSPHATE CYCLASE"/>
    <property type="match status" value="1"/>
</dbReference>
<dbReference type="PANTHER" id="PTHR11096:SF0">
    <property type="entry name" value="RNA 3'-TERMINAL PHOSPHATE CYCLASE"/>
    <property type="match status" value="1"/>
</dbReference>
<dbReference type="Pfam" id="PF01137">
    <property type="entry name" value="RTC"/>
    <property type="match status" value="1"/>
</dbReference>
<dbReference type="Pfam" id="PF05189">
    <property type="entry name" value="RTC_insert"/>
    <property type="match status" value="1"/>
</dbReference>
<dbReference type="PIRSF" id="PIRSF005378">
    <property type="entry name" value="RNA3'_term_phos_cycl_euk"/>
    <property type="match status" value="1"/>
</dbReference>
<dbReference type="SUPFAM" id="SSF55205">
    <property type="entry name" value="EPT/RTPC-like"/>
    <property type="match status" value="2"/>
</dbReference>
<dbReference type="SUPFAM" id="SSF52913">
    <property type="entry name" value="RNA 3'-terminal phosphate cyclase, RPTC, insert domain"/>
    <property type="match status" value="1"/>
</dbReference>
<dbReference type="PROSITE" id="PS01287">
    <property type="entry name" value="RTC"/>
    <property type="match status" value="1"/>
</dbReference>
<evidence type="ECO:0000255" key="1">
    <source>
        <dbReference type="HAMAP-Rule" id="MF_00200"/>
    </source>
</evidence>
<comment type="function">
    <text evidence="1">Catalyzes the conversion of 3'-phosphate to a 2',3'-cyclic phosphodiester at the end of RNA. The mechanism of action of the enzyme occurs in 3 steps: (A) adenylation of the enzyme by ATP; (B) transfer of adenylate to an RNA-N3'P to produce RNA-N3'PP5'A; (C) and attack of the adjacent 2'-hydroxyl on the 3'-phosphorus in the diester linkage to produce the cyclic end product. The biological role of this enzyme is unknown but it is likely to function in some aspects of cellular RNA processing.</text>
</comment>
<comment type="catalytic activity">
    <reaction evidence="1">
        <text>a 3'-end 3'-phospho-ribonucleotide-RNA + ATP = a 3'-end 2',3'-cyclophospho-ribonucleotide-RNA + AMP + diphosphate</text>
        <dbReference type="Rhea" id="RHEA:23976"/>
        <dbReference type="Rhea" id="RHEA-COMP:10463"/>
        <dbReference type="Rhea" id="RHEA-COMP:10464"/>
        <dbReference type="ChEBI" id="CHEBI:30616"/>
        <dbReference type="ChEBI" id="CHEBI:33019"/>
        <dbReference type="ChEBI" id="CHEBI:83062"/>
        <dbReference type="ChEBI" id="CHEBI:83064"/>
        <dbReference type="ChEBI" id="CHEBI:456215"/>
        <dbReference type="EC" id="6.5.1.4"/>
    </reaction>
</comment>
<comment type="subcellular location">
    <subcellularLocation>
        <location evidence="1">Cytoplasm</location>
    </subcellularLocation>
</comment>
<comment type="similarity">
    <text evidence="1">Belongs to the RNA 3'-terminal cyclase family. Type 1 subfamily.</text>
</comment>
<reference key="1">
    <citation type="journal article" date="2009" name="PLoS Genet.">
        <title>Organised genome dynamics in the Escherichia coli species results in highly diverse adaptive paths.</title>
        <authorList>
            <person name="Touchon M."/>
            <person name="Hoede C."/>
            <person name="Tenaillon O."/>
            <person name="Barbe V."/>
            <person name="Baeriswyl S."/>
            <person name="Bidet P."/>
            <person name="Bingen E."/>
            <person name="Bonacorsi S."/>
            <person name="Bouchier C."/>
            <person name="Bouvet O."/>
            <person name="Calteau A."/>
            <person name="Chiapello H."/>
            <person name="Clermont O."/>
            <person name="Cruveiller S."/>
            <person name="Danchin A."/>
            <person name="Diard M."/>
            <person name="Dossat C."/>
            <person name="Karoui M.E."/>
            <person name="Frapy E."/>
            <person name="Garry L."/>
            <person name="Ghigo J.M."/>
            <person name="Gilles A.M."/>
            <person name="Johnson J."/>
            <person name="Le Bouguenec C."/>
            <person name="Lescat M."/>
            <person name="Mangenot S."/>
            <person name="Martinez-Jehanne V."/>
            <person name="Matic I."/>
            <person name="Nassif X."/>
            <person name="Oztas S."/>
            <person name="Petit M.A."/>
            <person name="Pichon C."/>
            <person name="Rouy Z."/>
            <person name="Ruf C.S."/>
            <person name="Schneider D."/>
            <person name="Tourret J."/>
            <person name="Vacherie B."/>
            <person name="Vallenet D."/>
            <person name="Medigue C."/>
            <person name="Rocha E.P.C."/>
            <person name="Denamur E."/>
        </authorList>
    </citation>
    <scope>NUCLEOTIDE SEQUENCE [LARGE SCALE GENOMIC DNA]</scope>
    <source>
        <strain>ED1a</strain>
    </source>
</reference>
<proteinExistence type="inferred from homology"/>
<protein>
    <recommendedName>
        <fullName evidence="1">RNA 3'-terminal phosphate cyclase</fullName>
        <shortName evidence="1">RNA cyclase</shortName>
        <shortName evidence="1">RNA-3'-phosphate cyclase</shortName>
        <ecNumber evidence="1">6.5.1.4</ecNumber>
    </recommendedName>
</protein>